<accession>Q92377</accession>
<accession>P78933</accession>
<proteinExistence type="inferred from homology"/>
<keyword id="KW-0256">Endoplasmic reticulum</keyword>
<keyword id="KW-0445">Lipid transport</keyword>
<keyword id="KW-0446">Lipid-binding</keyword>
<keyword id="KW-0472">Membrane</keyword>
<keyword id="KW-0496">Mitochondrion</keyword>
<keyword id="KW-1000">Mitochondrion outer membrane</keyword>
<keyword id="KW-1185">Reference proteome</keyword>
<keyword id="KW-0813">Transport</keyword>
<feature type="chain" id="PRO_0000096328" description="Mitochondrial distribution and morphology protein 12">
    <location>
        <begin position="1"/>
        <end position="273"/>
    </location>
</feature>
<feature type="domain" description="SMP-LTD" evidence="1">
    <location>
        <begin position="1"/>
        <end position="273"/>
    </location>
</feature>
<feature type="region of interest" description="Disordered" evidence="2">
    <location>
        <begin position="124"/>
        <end position="145"/>
    </location>
</feature>
<organism>
    <name type="scientific">Schizosaccharomyces pombe (strain 972 / ATCC 24843)</name>
    <name type="common">Fission yeast</name>
    <dbReference type="NCBI Taxonomy" id="284812"/>
    <lineage>
        <taxon>Eukaryota</taxon>
        <taxon>Fungi</taxon>
        <taxon>Dikarya</taxon>
        <taxon>Ascomycota</taxon>
        <taxon>Taphrinomycotina</taxon>
        <taxon>Schizosaccharomycetes</taxon>
        <taxon>Schizosaccharomycetales</taxon>
        <taxon>Schizosaccharomycetaceae</taxon>
        <taxon>Schizosaccharomyces</taxon>
    </lineage>
</organism>
<gene>
    <name evidence="1" type="primary">mdm12</name>
    <name type="ORF">SPBC28F2.06c</name>
</gene>
<dbReference type="EMBL" id="U64674">
    <property type="protein sequence ID" value="AAB17957.1"/>
    <property type="molecule type" value="Genomic_DNA"/>
</dbReference>
<dbReference type="EMBL" id="D83992">
    <property type="protein sequence ID" value="BAA12181.1"/>
    <property type="status" value="ALT_FRAME"/>
    <property type="molecule type" value="Genomic_DNA"/>
</dbReference>
<dbReference type="EMBL" id="CU329671">
    <property type="protein sequence ID" value="CAB57935.1"/>
    <property type="molecule type" value="Genomic_DNA"/>
</dbReference>
<dbReference type="PIR" id="T48693">
    <property type="entry name" value="T48693"/>
</dbReference>
<dbReference type="RefSeq" id="NP_595667.1">
    <property type="nucleotide sequence ID" value="NM_001021562.2"/>
</dbReference>
<dbReference type="SMR" id="Q92377"/>
<dbReference type="BioGRID" id="277089">
    <property type="interactions" value="17"/>
</dbReference>
<dbReference type="FunCoup" id="Q92377">
    <property type="interactions" value="43"/>
</dbReference>
<dbReference type="STRING" id="284812.Q92377"/>
<dbReference type="iPTMnet" id="Q92377"/>
<dbReference type="PaxDb" id="4896-SPBC28F2.06c.1"/>
<dbReference type="EnsemblFungi" id="SPBC28F2.06c.1">
    <property type="protein sequence ID" value="SPBC28F2.06c.1:pep"/>
    <property type="gene ID" value="SPBC28F2.06c"/>
</dbReference>
<dbReference type="GeneID" id="2540562"/>
<dbReference type="KEGG" id="spo:2540562"/>
<dbReference type="PomBase" id="SPBC28F2.06c">
    <property type="gene designation" value="mdm12"/>
</dbReference>
<dbReference type="VEuPathDB" id="FungiDB:SPBC28F2.06c"/>
<dbReference type="eggNOG" id="ENOG502S3PB">
    <property type="taxonomic scope" value="Eukaryota"/>
</dbReference>
<dbReference type="HOGENOM" id="CLU_026794_2_0_1"/>
<dbReference type="InParanoid" id="Q92377"/>
<dbReference type="OMA" id="AAWPSWI"/>
<dbReference type="PhylomeDB" id="Q92377"/>
<dbReference type="PRO" id="PR:Q92377"/>
<dbReference type="Proteomes" id="UP000002485">
    <property type="component" value="Chromosome II"/>
</dbReference>
<dbReference type="GO" id="GO:0005789">
    <property type="term" value="C:endoplasmic reticulum membrane"/>
    <property type="evidence" value="ECO:0007669"/>
    <property type="project" value="UniProtKB-SubCell"/>
</dbReference>
<dbReference type="GO" id="GO:0032865">
    <property type="term" value="C:ERMES complex"/>
    <property type="evidence" value="ECO:0000318"/>
    <property type="project" value="GO_Central"/>
</dbReference>
<dbReference type="GO" id="GO:0008289">
    <property type="term" value="F:lipid binding"/>
    <property type="evidence" value="ECO:0007669"/>
    <property type="project" value="UniProtKB-KW"/>
</dbReference>
<dbReference type="GO" id="GO:0140474">
    <property type="term" value="F:mitochondrion-endoplasmic reticulum membrane tether activity"/>
    <property type="evidence" value="ECO:0000305"/>
    <property type="project" value="PomBase"/>
</dbReference>
<dbReference type="GO" id="GO:0120010">
    <property type="term" value="P:intermembrane phospholipid transfer"/>
    <property type="evidence" value="ECO:0000304"/>
    <property type="project" value="PomBase"/>
</dbReference>
<dbReference type="GO" id="GO:0000002">
    <property type="term" value="P:mitochondrial genome maintenance"/>
    <property type="evidence" value="ECO:0007669"/>
    <property type="project" value="UniProtKB-UniRule"/>
</dbReference>
<dbReference type="GO" id="GO:0007006">
    <property type="term" value="P:mitochondrial membrane organization"/>
    <property type="evidence" value="ECO:0000305"/>
    <property type="project" value="PomBase"/>
</dbReference>
<dbReference type="GO" id="GO:1990456">
    <property type="term" value="P:mitochondrion-endoplasmic reticulum membrane tethering"/>
    <property type="evidence" value="ECO:0000318"/>
    <property type="project" value="GO_Central"/>
</dbReference>
<dbReference type="GO" id="GO:0015914">
    <property type="term" value="P:phospholipid transport"/>
    <property type="evidence" value="ECO:0000318"/>
    <property type="project" value="GO_Central"/>
</dbReference>
<dbReference type="GO" id="GO:0045040">
    <property type="term" value="P:protein insertion into mitochondrial outer membrane"/>
    <property type="evidence" value="ECO:0007669"/>
    <property type="project" value="UniProtKB-UniRule"/>
</dbReference>
<dbReference type="CDD" id="cd21672">
    <property type="entry name" value="SMP_Mdm12"/>
    <property type="match status" value="1"/>
</dbReference>
<dbReference type="HAMAP" id="MF_03104">
    <property type="entry name" value="Mdm12"/>
    <property type="match status" value="1"/>
</dbReference>
<dbReference type="InterPro" id="IPR027532">
    <property type="entry name" value="Mdm12"/>
</dbReference>
<dbReference type="InterPro" id="IPR031468">
    <property type="entry name" value="SMP_LBD"/>
</dbReference>
<dbReference type="PANTHER" id="PTHR28204">
    <property type="entry name" value="MITOCHONDRIAL DISTRIBUTION AND MORPHOLOGY PROTEIN 12"/>
    <property type="match status" value="1"/>
</dbReference>
<dbReference type="PANTHER" id="PTHR28204:SF1">
    <property type="entry name" value="MITOCHONDRIAL DISTRIBUTION AND MORPHOLOGY PROTEIN 12"/>
    <property type="match status" value="1"/>
</dbReference>
<dbReference type="PROSITE" id="PS51847">
    <property type="entry name" value="SMP"/>
    <property type="match status" value="1"/>
</dbReference>
<reference key="1">
    <citation type="journal article" date="1997" name="J. Cell Biol.">
        <title>Mdm12p, a component required for mitochondrial inheritance that is conserved between budding and fission yeast.</title>
        <authorList>
            <person name="Berger K.H."/>
            <person name="Sogo L.F."/>
            <person name="Yaffe M.P."/>
        </authorList>
    </citation>
    <scope>NUCLEOTIDE SEQUENCE [GENOMIC DNA]</scope>
    <source>
        <strain>972 / ATCC 24843</strain>
    </source>
</reference>
<reference key="2">
    <citation type="submission" date="1996-03" db="EMBL/GenBank/DDBJ databases">
        <title>S.pombe chromosome II cosmid 1228 sequence.</title>
        <authorList>
            <person name="Kohnosu A."/>
            <person name="Niwa O."/>
            <person name="Yano M."/>
            <person name="Saitoh S."/>
            <person name="Katayama T."/>
            <person name="Nagao K."/>
            <person name="Yanagida M."/>
        </authorList>
    </citation>
    <scope>NUCLEOTIDE SEQUENCE [GENOMIC DNA]</scope>
    <source>
        <strain>972 / ATCC 24843</strain>
    </source>
</reference>
<reference key="3">
    <citation type="journal article" date="2002" name="Nature">
        <title>The genome sequence of Schizosaccharomyces pombe.</title>
        <authorList>
            <person name="Wood V."/>
            <person name="Gwilliam R."/>
            <person name="Rajandream M.A."/>
            <person name="Lyne M.H."/>
            <person name="Lyne R."/>
            <person name="Stewart A."/>
            <person name="Sgouros J.G."/>
            <person name="Peat N."/>
            <person name="Hayles J."/>
            <person name="Baker S.G."/>
            <person name="Basham D."/>
            <person name="Bowman S."/>
            <person name="Brooks K."/>
            <person name="Brown D."/>
            <person name="Brown S."/>
            <person name="Chillingworth T."/>
            <person name="Churcher C.M."/>
            <person name="Collins M."/>
            <person name="Connor R."/>
            <person name="Cronin A."/>
            <person name="Davis P."/>
            <person name="Feltwell T."/>
            <person name="Fraser A."/>
            <person name="Gentles S."/>
            <person name="Goble A."/>
            <person name="Hamlin N."/>
            <person name="Harris D.E."/>
            <person name="Hidalgo J."/>
            <person name="Hodgson G."/>
            <person name="Holroyd S."/>
            <person name="Hornsby T."/>
            <person name="Howarth S."/>
            <person name="Huckle E.J."/>
            <person name="Hunt S."/>
            <person name="Jagels K."/>
            <person name="James K.D."/>
            <person name="Jones L."/>
            <person name="Jones M."/>
            <person name="Leather S."/>
            <person name="McDonald S."/>
            <person name="McLean J."/>
            <person name="Mooney P."/>
            <person name="Moule S."/>
            <person name="Mungall K.L."/>
            <person name="Murphy L.D."/>
            <person name="Niblett D."/>
            <person name="Odell C."/>
            <person name="Oliver K."/>
            <person name="O'Neil S."/>
            <person name="Pearson D."/>
            <person name="Quail M.A."/>
            <person name="Rabbinowitsch E."/>
            <person name="Rutherford K.M."/>
            <person name="Rutter S."/>
            <person name="Saunders D."/>
            <person name="Seeger K."/>
            <person name="Sharp S."/>
            <person name="Skelton J."/>
            <person name="Simmonds M.N."/>
            <person name="Squares R."/>
            <person name="Squares S."/>
            <person name="Stevens K."/>
            <person name="Taylor K."/>
            <person name="Taylor R.G."/>
            <person name="Tivey A."/>
            <person name="Walsh S.V."/>
            <person name="Warren T."/>
            <person name="Whitehead S."/>
            <person name="Woodward J.R."/>
            <person name="Volckaert G."/>
            <person name="Aert R."/>
            <person name="Robben J."/>
            <person name="Grymonprez B."/>
            <person name="Weltjens I."/>
            <person name="Vanstreels E."/>
            <person name="Rieger M."/>
            <person name="Schaefer M."/>
            <person name="Mueller-Auer S."/>
            <person name="Gabel C."/>
            <person name="Fuchs M."/>
            <person name="Duesterhoeft A."/>
            <person name="Fritzc C."/>
            <person name="Holzer E."/>
            <person name="Moestl D."/>
            <person name="Hilbert H."/>
            <person name="Borzym K."/>
            <person name="Langer I."/>
            <person name="Beck A."/>
            <person name="Lehrach H."/>
            <person name="Reinhardt R."/>
            <person name="Pohl T.M."/>
            <person name="Eger P."/>
            <person name="Zimmermann W."/>
            <person name="Wedler H."/>
            <person name="Wambutt R."/>
            <person name="Purnelle B."/>
            <person name="Goffeau A."/>
            <person name="Cadieu E."/>
            <person name="Dreano S."/>
            <person name="Gloux S."/>
            <person name="Lelaure V."/>
            <person name="Mottier S."/>
            <person name="Galibert F."/>
            <person name="Aves S.J."/>
            <person name="Xiang Z."/>
            <person name="Hunt C."/>
            <person name="Moore K."/>
            <person name="Hurst S.M."/>
            <person name="Lucas M."/>
            <person name="Rochet M."/>
            <person name="Gaillardin C."/>
            <person name="Tallada V.A."/>
            <person name="Garzon A."/>
            <person name="Thode G."/>
            <person name="Daga R.R."/>
            <person name="Cruzado L."/>
            <person name="Jimenez J."/>
            <person name="Sanchez M."/>
            <person name="del Rey F."/>
            <person name="Benito J."/>
            <person name="Dominguez A."/>
            <person name="Revuelta J.L."/>
            <person name="Moreno S."/>
            <person name="Armstrong J."/>
            <person name="Forsburg S.L."/>
            <person name="Cerutti L."/>
            <person name="Lowe T."/>
            <person name="McCombie W.R."/>
            <person name="Paulsen I."/>
            <person name="Potashkin J."/>
            <person name="Shpakovski G.V."/>
            <person name="Ussery D."/>
            <person name="Barrell B.G."/>
            <person name="Nurse P."/>
        </authorList>
    </citation>
    <scope>NUCLEOTIDE SEQUENCE [LARGE SCALE GENOMIC DNA]</scope>
    <source>
        <strain>972 / ATCC 24843</strain>
    </source>
</reference>
<protein>
    <recommendedName>
        <fullName evidence="1">Mitochondrial distribution and morphology protein 12</fullName>
    </recommendedName>
    <alternativeName>
        <fullName evidence="1">Mitochondrial inheritance component mdm12</fullName>
    </alternativeName>
</protein>
<evidence type="ECO:0000255" key="1">
    <source>
        <dbReference type="HAMAP-Rule" id="MF_03104"/>
    </source>
</evidence>
<evidence type="ECO:0000256" key="2">
    <source>
        <dbReference type="SAM" id="MobiDB-lite"/>
    </source>
</evidence>
<evidence type="ECO:0000305" key="3"/>
<comment type="function">
    <text evidence="1">Component of the ERMES/MDM complex, which serves as a molecular tether to connect the endoplasmic reticulum (ER) and mitochondria. Components of this complex are involved in the control of mitochondrial shape and protein biogenesis, and function in nonvesicular lipid trafficking between the ER and mitochondria. Mdm12 is required for the interaction of the ER-resident membrane protein mmm1 and the outer mitochondrial membrane-resident beta-barrel protein mdm10. The mdm12-mmm1 subcomplex functions in the major beta-barrel assembly pathway that is responsible for biogenesis of all mitochondrial outer membrane beta-barrel proteins, and acts in a late step after the SAM complex. The mdm10-mdm12-mmm1 subcomplex further acts in the TOM40-specific pathway after the action of the mdm12-mmm1 complex. Essential for establishing and maintaining the structure of mitochondria and maintenance of mtDNA nucleoids.</text>
</comment>
<comment type="subunit">
    <text evidence="1">Component of the ER-mitochondria encounter structure (ERMES) or MDM complex, composed of mmm1, mdm10, mdm12 and mdm34. A mmm1 homodimer associates with one molecule of mdm12 on each side in a pairwise head-to-tail manner, and the SMP-LTD domains of mmm1 and mdm12 generate a continuous hydrophobic tunnel for phospholipid trafficking.</text>
</comment>
<comment type="subcellular location">
    <subcellularLocation>
        <location evidence="1">Mitochondrion outer membrane</location>
        <topology evidence="1">Peripheral membrane protein</topology>
        <orientation evidence="1">Cytoplasmic side</orientation>
    </subcellularLocation>
    <subcellularLocation>
        <location evidence="1">Endoplasmic reticulum membrane</location>
        <topology evidence="1">Peripheral membrane protein</topology>
        <orientation evidence="1">Cytoplasmic side</orientation>
    </subcellularLocation>
    <text evidence="1">The ERMES/MDM complex localizes to a few discrete foci (around 10 per single cell), that represent mitochondria-endoplasmic reticulum junctions. These foci are often found next to mtDNA nucleoids.</text>
</comment>
<comment type="domain">
    <text evidence="1">The SMP-LTD domain is a barrel-like domain that can bind various types of glycerophospholipids in its interior and mediate their transfer between two adjacent bilayers.</text>
</comment>
<comment type="similarity">
    <text evidence="1">Belongs to the MDM12 family.</text>
</comment>
<comment type="sequence caution" evidence="3">
    <conflict type="frameshift">
        <sequence resource="EMBL-CDS" id="BAA12181"/>
    </conflict>
</comment>
<name>MDM12_SCHPO</name>
<sequence>MSIDFDWSKLDSELEAKVLHLLEGQVSNLSLPSYIKHLKVVDFHFGKVSPQITIQEIGDPDPQFYENEAFELANQELEGDQCSRNNVSPVLTDLPPYAAEHPFSRLAYFNPAFNSPGILSASGLTSPIPESRPSTPMDNHQERDRSNDFQVTAHVSYDGDANLSLEAVLSMNYPNSEFAVLPFKLSFIRISIDAIAVLAKMGKRTHLCFVDTLLHGTGEHASSVIRDLTVESIIGESNKQLLKNVAKVEKFVSEKVKRIIEDELVWPSYITIE</sequence>